<evidence type="ECO:0000255" key="1">
    <source>
        <dbReference type="HAMAP-Rule" id="MF_00531"/>
    </source>
</evidence>
<evidence type="ECO:0000305" key="2"/>
<gene>
    <name evidence="1" type="primary">rpsS</name>
    <name type="ordered locus">Pden_0763</name>
</gene>
<accession>A1B031</accession>
<comment type="function">
    <text evidence="1">Protein S19 forms a complex with S13 that binds strongly to the 16S ribosomal RNA.</text>
</comment>
<comment type="similarity">
    <text evidence="1">Belongs to the universal ribosomal protein uS19 family.</text>
</comment>
<reference key="1">
    <citation type="submission" date="2006-12" db="EMBL/GenBank/DDBJ databases">
        <title>Complete sequence of chromosome 1 of Paracoccus denitrificans PD1222.</title>
        <authorList>
            <person name="Copeland A."/>
            <person name="Lucas S."/>
            <person name="Lapidus A."/>
            <person name="Barry K."/>
            <person name="Detter J.C."/>
            <person name="Glavina del Rio T."/>
            <person name="Hammon N."/>
            <person name="Israni S."/>
            <person name="Dalin E."/>
            <person name="Tice H."/>
            <person name="Pitluck S."/>
            <person name="Munk A.C."/>
            <person name="Brettin T."/>
            <person name="Bruce D."/>
            <person name="Han C."/>
            <person name="Tapia R."/>
            <person name="Gilna P."/>
            <person name="Schmutz J."/>
            <person name="Larimer F."/>
            <person name="Land M."/>
            <person name="Hauser L."/>
            <person name="Kyrpides N."/>
            <person name="Lykidis A."/>
            <person name="Spiro S."/>
            <person name="Richardson D.J."/>
            <person name="Moir J.W.B."/>
            <person name="Ferguson S.J."/>
            <person name="van Spanning R.J.M."/>
            <person name="Richardson P."/>
        </authorList>
    </citation>
    <scope>NUCLEOTIDE SEQUENCE [LARGE SCALE GENOMIC DNA]</scope>
    <source>
        <strain>Pd 1222</strain>
    </source>
</reference>
<protein>
    <recommendedName>
        <fullName evidence="1">Small ribosomal subunit protein uS19</fullName>
    </recommendedName>
    <alternativeName>
        <fullName evidence="2">30S ribosomal protein S19</fullName>
    </alternativeName>
</protein>
<keyword id="KW-1185">Reference proteome</keyword>
<keyword id="KW-0687">Ribonucleoprotein</keyword>
<keyword id="KW-0689">Ribosomal protein</keyword>
<keyword id="KW-0694">RNA-binding</keyword>
<keyword id="KW-0699">rRNA-binding</keyword>
<organism>
    <name type="scientific">Paracoccus denitrificans (strain Pd 1222)</name>
    <dbReference type="NCBI Taxonomy" id="318586"/>
    <lineage>
        <taxon>Bacteria</taxon>
        <taxon>Pseudomonadati</taxon>
        <taxon>Pseudomonadota</taxon>
        <taxon>Alphaproteobacteria</taxon>
        <taxon>Rhodobacterales</taxon>
        <taxon>Paracoccaceae</taxon>
        <taxon>Paracoccus</taxon>
    </lineage>
</organism>
<feature type="chain" id="PRO_1000051093" description="Small ribosomal subunit protein uS19">
    <location>
        <begin position="1"/>
        <end position="92"/>
    </location>
</feature>
<proteinExistence type="inferred from homology"/>
<sequence>MARSVWKGPFVDAYVLRKAEKARESGKSDVIKIWSRRSTILPQFVGLTFGVYNGQKHIPVSVTEEMIGQKFGEYSPTRTYYGHAADKKAKRK</sequence>
<dbReference type="EMBL" id="CP000489">
    <property type="protein sequence ID" value="ABL68875.1"/>
    <property type="molecule type" value="Genomic_DNA"/>
</dbReference>
<dbReference type="RefSeq" id="WP_010400236.1">
    <property type="nucleotide sequence ID" value="NC_008686.1"/>
</dbReference>
<dbReference type="SMR" id="A1B031"/>
<dbReference type="STRING" id="318586.Pden_0763"/>
<dbReference type="EnsemblBacteria" id="ABL68875">
    <property type="protein sequence ID" value="ABL68875"/>
    <property type="gene ID" value="Pden_0763"/>
</dbReference>
<dbReference type="GeneID" id="93451987"/>
<dbReference type="KEGG" id="pde:Pden_0763"/>
<dbReference type="eggNOG" id="COG0185">
    <property type="taxonomic scope" value="Bacteria"/>
</dbReference>
<dbReference type="HOGENOM" id="CLU_144911_0_1_5"/>
<dbReference type="OrthoDB" id="9797833at2"/>
<dbReference type="Proteomes" id="UP000000361">
    <property type="component" value="Chromosome 1"/>
</dbReference>
<dbReference type="GO" id="GO:0005737">
    <property type="term" value="C:cytoplasm"/>
    <property type="evidence" value="ECO:0007669"/>
    <property type="project" value="UniProtKB-ARBA"/>
</dbReference>
<dbReference type="GO" id="GO:0015935">
    <property type="term" value="C:small ribosomal subunit"/>
    <property type="evidence" value="ECO:0007669"/>
    <property type="project" value="InterPro"/>
</dbReference>
<dbReference type="GO" id="GO:0019843">
    <property type="term" value="F:rRNA binding"/>
    <property type="evidence" value="ECO:0007669"/>
    <property type="project" value="UniProtKB-UniRule"/>
</dbReference>
<dbReference type="GO" id="GO:0003735">
    <property type="term" value="F:structural constituent of ribosome"/>
    <property type="evidence" value="ECO:0007669"/>
    <property type="project" value="InterPro"/>
</dbReference>
<dbReference type="GO" id="GO:0000028">
    <property type="term" value="P:ribosomal small subunit assembly"/>
    <property type="evidence" value="ECO:0007669"/>
    <property type="project" value="TreeGrafter"/>
</dbReference>
<dbReference type="GO" id="GO:0006412">
    <property type="term" value="P:translation"/>
    <property type="evidence" value="ECO:0007669"/>
    <property type="project" value="UniProtKB-UniRule"/>
</dbReference>
<dbReference type="FunFam" id="3.30.860.10:FF:000001">
    <property type="entry name" value="30S ribosomal protein S19"/>
    <property type="match status" value="1"/>
</dbReference>
<dbReference type="Gene3D" id="3.30.860.10">
    <property type="entry name" value="30s Ribosomal Protein S19, Chain A"/>
    <property type="match status" value="1"/>
</dbReference>
<dbReference type="HAMAP" id="MF_00531">
    <property type="entry name" value="Ribosomal_uS19"/>
    <property type="match status" value="1"/>
</dbReference>
<dbReference type="InterPro" id="IPR002222">
    <property type="entry name" value="Ribosomal_uS19"/>
</dbReference>
<dbReference type="InterPro" id="IPR005732">
    <property type="entry name" value="Ribosomal_uS19_bac-type"/>
</dbReference>
<dbReference type="InterPro" id="IPR020934">
    <property type="entry name" value="Ribosomal_uS19_CS"/>
</dbReference>
<dbReference type="InterPro" id="IPR023575">
    <property type="entry name" value="Ribosomal_uS19_SF"/>
</dbReference>
<dbReference type="NCBIfam" id="TIGR01050">
    <property type="entry name" value="rpsS_bact"/>
    <property type="match status" value="1"/>
</dbReference>
<dbReference type="PANTHER" id="PTHR11880">
    <property type="entry name" value="RIBOSOMAL PROTEIN S19P FAMILY MEMBER"/>
    <property type="match status" value="1"/>
</dbReference>
<dbReference type="PANTHER" id="PTHR11880:SF8">
    <property type="entry name" value="SMALL RIBOSOMAL SUBUNIT PROTEIN US19M"/>
    <property type="match status" value="1"/>
</dbReference>
<dbReference type="Pfam" id="PF00203">
    <property type="entry name" value="Ribosomal_S19"/>
    <property type="match status" value="1"/>
</dbReference>
<dbReference type="PIRSF" id="PIRSF002144">
    <property type="entry name" value="Ribosomal_S19"/>
    <property type="match status" value="1"/>
</dbReference>
<dbReference type="PRINTS" id="PR00975">
    <property type="entry name" value="RIBOSOMALS19"/>
</dbReference>
<dbReference type="SUPFAM" id="SSF54570">
    <property type="entry name" value="Ribosomal protein S19"/>
    <property type="match status" value="1"/>
</dbReference>
<dbReference type="PROSITE" id="PS00323">
    <property type="entry name" value="RIBOSOMAL_S19"/>
    <property type="match status" value="1"/>
</dbReference>
<name>RS19_PARDP</name>